<feature type="chain" id="PRO_0000453479" description="FAD-dependent monooxygenase AacuC">
    <location>
        <begin position="1"/>
        <end position="514"/>
    </location>
</feature>
<feature type="region of interest" description="Disordered" evidence="3">
    <location>
        <begin position="1"/>
        <end position="29"/>
    </location>
</feature>
<feature type="compositionally biased region" description="Basic and acidic residues" evidence="3">
    <location>
        <begin position="8"/>
        <end position="17"/>
    </location>
</feature>
<feature type="active site" evidence="2">
    <location>
        <position position="227"/>
    </location>
</feature>
<feature type="binding site" evidence="1">
    <location>
        <position position="79"/>
    </location>
    <ligand>
        <name>FAD</name>
        <dbReference type="ChEBI" id="CHEBI:57692"/>
    </ligand>
</feature>
<feature type="binding site" evidence="1">
    <location>
        <position position="146"/>
    </location>
    <ligand>
        <name>FAD</name>
        <dbReference type="ChEBI" id="CHEBI:57692"/>
    </ligand>
</feature>
<feature type="binding site" evidence="1">
    <location>
        <position position="358"/>
    </location>
    <ligand>
        <name>FAD</name>
        <dbReference type="ChEBI" id="CHEBI:57692"/>
    </ligand>
</feature>
<feature type="binding site" evidence="1">
    <location>
        <position position="371"/>
    </location>
    <ligand>
        <name>FAD</name>
        <dbReference type="ChEBI" id="CHEBI:57692"/>
    </ligand>
</feature>
<evidence type="ECO:0000250" key="1">
    <source>
        <dbReference type="UniProtKB" id="B8M9J8"/>
    </source>
</evidence>
<evidence type="ECO:0000250" key="2">
    <source>
        <dbReference type="UniProtKB" id="L0E4H0"/>
    </source>
</evidence>
<evidence type="ECO:0000256" key="3">
    <source>
        <dbReference type="SAM" id="MobiDB-lite"/>
    </source>
</evidence>
<evidence type="ECO:0000269" key="4">
    <source>
    </source>
</evidence>
<evidence type="ECO:0000269" key="5">
    <source>
    </source>
</evidence>
<evidence type="ECO:0000269" key="6">
    <source>
    </source>
</evidence>
<evidence type="ECO:0000269" key="7">
    <source>
    </source>
</evidence>
<evidence type="ECO:0000269" key="8">
    <source>
    </source>
</evidence>
<evidence type="ECO:0000269" key="9">
    <source>
    </source>
</evidence>
<evidence type="ECO:0000303" key="10">
    <source>
    </source>
</evidence>
<evidence type="ECO:0000305" key="11"/>
<evidence type="ECO:0000305" key="12">
    <source>
    </source>
</evidence>
<evidence type="ECO:0000305" key="13">
    <source>
    </source>
</evidence>
<sequence length="514" mass="57078">MVSNEYLTHGDKDEFDPAKWSSTPGELPPRSPATNLNVLIVGAGPAGLITALECWRKGHNVVRILERSQGPVYTGDIIVIGPSAICTLRHWPEICRELDQDRSDSVMYYRRHNGELILGPTTLGYNSPEHLAQRHGLPYVAPHQVRRQFYRMLLRQVARIGLQVEYGQRVERYFEDEAAGVGGVVTADGSVRAAHLVVAADAFKTRSDLLIAGRHAPTRSSGMSVYRAALPTELALRDPAFQARWGEVVARGESHHEFWIGPGMHLGLFISPNFVAYGLSPRDKFLQPGGIEPIESWDPDVNPQEVLDVLHRIPDWDPAIEGLIRHTPPRATVHWPLLWRNLRREWTSKAGRVVQVGDAAHTTVPASISGGTLAIEDAVTLAACLQLACAGGAPGGAPLGARIYNLLRYQRVSCVQKMSFVNSENLGAADMNEVLKKDPEKVKVRFPKWLFQHDPEAYVYEKYGQAYAHLVLGTDFQNTNFPPGHDFKMWTIEEIHADILAGKKVADLLDGDWD</sequence>
<dbReference type="EC" id="1.-.-.-" evidence="12"/>
<dbReference type="EMBL" id="KV878984">
    <property type="protein sequence ID" value="OJJ96981.1"/>
    <property type="molecule type" value="Genomic_DNA"/>
</dbReference>
<dbReference type="RefSeq" id="XP_020053321.1">
    <property type="nucleotide sequence ID" value="XM_020203870.1"/>
</dbReference>
<dbReference type="SMR" id="A0A1L9WLG2"/>
<dbReference type="STRING" id="690307.A0A1L9WLG2"/>
<dbReference type="GeneID" id="30977684"/>
<dbReference type="VEuPathDB" id="FungiDB:ASPACDRAFT_63291"/>
<dbReference type="OMA" id="ANESWVP"/>
<dbReference type="OrthoDB" id="16820at2759"/>
<dbReference type="Proteomes" id="UP000184546">
    <property type="component" value="Unassembled WGS sequence"/>
</dbReference>
<dbReference type="GO" id="GO:0071949">
    <property type="term" value="F:FAD binding"/>
    <property type="evidence" value="ECO:0007669"/>
    <property type="project" value="InterPro"/>
</dbReference>
<dbReference type="GO" id="GO:0004497">
    <property type="term" value="F:monooxygenase activity"/>
    <property type="evidence" value="ECO:0007669"/>
    <property type="project" value="UniProtKB-KW"/>
</dbReference>
<dbReference type="Gene3D" id="3.50.50.60">
    <property type="entry name" value="FAD/NAD(P)-binding domain"/>
    <property type="match status" value="1"/>
</dbReference>
<dbReference type="InterPro" id="IPR002938">
    <property type="entry name" value="FAD-bd"/>
</dbReference>
<dbReference type="InterPro" id="IPR050493">
    <property type="entry name" value="FAD-dep_Monooxygenase_BioMet"/>
</dbReference>
<dbReference type="InterPro" id="IPR036188">
    <property type="entry name" value="FAD/NAD-bd_sf"/>
</dbReference>
<dbReference type="PANTHER" id="PTHR13789:SF315">
    <property type="entry name" value="FAD-DEPENDENT MONOOXYGENASE MDPD"/>
    <property type="match status" value="1"/>
</dbReference>
<dbReference type="PANTHER" id="PTHR13789">
    <property type="entry name" value="MONOOXYGENASE"/>
    <property type="match status" value="1"/>
</dbReference>
<dbReference type="Pfam" id="PF01494">
    <property type="entry name" value="FAD_binding_3"/>
    <property type="match status" value="1"/>
</dbReference>
<dbReference type="PRINTS" id="PR00420">
    <property type="entry name" value="RNGMNOXGNASE"/>
</dbReference>
<dbReference type="SUPFAM" id="SSF51905">
    <property type="entry name" value="FAD/NAD(P)-binding domain"/>
    <property type="match status" value="1"/>
</dbReference>
<comment type="function">
    <text evidence="7 9 13">FAD-dependent monooxygenase; part of the gene cluster that mediates the biosynthesis of the tetrahydroxanthone dimer secalonic acid D (PubMed:30996871, PubMed:33891392). The pathway begins with the synthesis of atrochrysone thioester by the polyketide synthase AacuL (Probable). The atrochrysone carboxyl ACP thioesterase AacuM then breaks the thioester bond and releases the atrochrysone carboxylic acid from AacuL (Probable). Atrochrysone carboxylic acid is decarboxylated by the decarboxylase AacuI, and oxidized by the anthrone oxygenase AacuG to yield emodin (Probable). Emodin is then reduced to emodin hydroquinone by a yet unidentified oxidoreductase (Probable). A-ring reduction by the short chain dehydrogenase AacuN, dehydration by the scytalone dehydratase-like protein AacuK and probable spontaneous re-oxidation, results in overall deoxygenation to chrysophanol (PubMed:33891392). Baeyer-Villiger oxidation by the Baeyer-Villiger monooxygenase (BVMO) AacuH then yields monodictyphenone (PubMed:33891392). Monodictyphenone is transformed into compounds with the tetrahydroxanthone skeleton via methylesterification by the methyltransferase AacuQ, followed by the action of the flavin-dependent monooxygenase AacuC, the isomerase AacuP, and the short chain dehydrogenase/reductase AacuF or AacuD (PubMed:33891392). AacuF and AacuD should accept the same compound as a substrate but perform the ketoreduction with a different stereoselectivity, thus yielding blennolides B and A, respectively (PubMed:33891392). In the final step of the biosynthesis, the cytochrome P450 monooxygenase AacuE accepts blennolide B and/or blennolide A to conduct the dimerization reaction to furnish the tetrahydroxanthone dimers, secalonic acids D, B, and F (PubMed:33891392).</text>
</comment>
<comment type="cofactor">
    <cofactor evidence="11">
        <name>FAD</name>
        <dbReference type="ChEBI" id="CHEBI:57692"/>
    </cofactor>
</comment>
<comment type="pathway">
    <text evidence="12">Secondary metabolite biosynthesis.</text>
</comment>
<comment type="biotechnology">
    <text evidence="4 5 6 8">Secalonic acids show unprecedented anticancer activities against various human cancer cells and might be interesting for further derivatization, targeting diseases such as cancer.</text>
</comment>
<comment type="similarity">
    <text evidence="11">Belongs to the paxM FAD-dependent monooxygenase family.</text>
</comment>
<organism>
    <name type="scientific">Aspergillus aculeatus (strain ATCC 16872 / CBS 172.66 / WB 5094)</name>
    <dbReference type="NCBI Taxonomy" id="690307"/>
    <lineage>
        <taxon>Eukaryota</taxon>
        <taxon>Fungi</taxon>
        <taxon>Dikarya</taxon>
        <taxon>Ascomycota</taxon>
        <taxon>Pezizomycotina</taxon>
        <taxon>Eurotiomycetes</taxon>
        <taxon>Eurotiomycetidae</taxon>
        <taxon>Eurotiales</taxon>
        <taxon>Aspergillaceae</taxon>
        <taxon>Aspergillus</taxon>
        <taxon>Aspergillus subgen. Circumdati</taxon>
    </lineage>
</organism>
<protein>
    <recommendedName>
        <fullName evidence="10">FAD-dependent monooxygenase AacuC</fullName>
        <shortName evidence="10">FMO AacuC</shortName>
        <ecNumber evidence="12">1.-.-.-</ecNumber>
    </recommendedName>
    <alternativeName>
        <fullName evidence="10">Secalonic acid biosynthesis cluster protein C</fullName>
    </alternativeName>
</protein>
<proteinExistence type="evidence at protein level"/>
<accession>A0A1L9WLG2</accession>
<keyword id="KW-0274">FAD</keyword>
<keyword id="KW-0285">Flavoprotein</keyword>
<keyword id="KW-0503">Monooxygenase</keyword>
<keyword id="KW-0560">Oxidoreductase</keyword>
<keyword id="KW-1185">Reference proteome</keyword>
<gene>
    <name evidence="10" type="primary">AacuC</name>
    <name type="ORF">ASPACDRAFT_63291</name>
</gene>
<name>AACUC_ASPA1</name>
<reference key="1">
    <citation type="journal article" date="2017" name="Genome Biol.">
        <title>Comparative genomics reveals high biological diversity and specific adaptations in the industrially and medically important fungal genus Aspergillus.</title>
        <authorList>
            <person name="de Vries R.P."/>
            <person name="Riley R."/>
            <person name="Wiebenga A."/>
            <person name="Aguilar-Osorio G."/>
            <person name="Amillis S."/>
            <person name="Uchima C.A."/>
            <person name="Anderluh G."/>
            <person name="Asadollahi M."/>
            <person name="Askin M."/>
            <person name="Barry K."/>
            <person name="Battaglia E."/>
            <person name="Bayram O."/>
            <person name="Benocci T."/>
            <person name="Braus-Stromeyer S.A."/>
            <person name="Caldana C."/>
            <person name="Canovas D."/>
            <person name="Cerqueira G.C."/>
            <person name="Chen F."/>
            <person name="Chen W."/>
            <person name="Choi C."/>
            <person name="Clum A."/>
            <person name="Dos Santos R.A."/>
            <person name="Damasio A.R."/>
            <person name="Diallinas G."/>
            <person name="Emri T."/>
            <person name="Fekete E."/>
            <person name="Flipphi M."/>
            <person name="Freyberg S."/>
            <person name="Gallo A."/>
            <person name="Gournas C."/>
            <person name="Habgood R."/>
            <person name="Hainaut M."/>
            <person name="Harispe M.L."/>
            <person name="Henrissat B."/>
            <person name="Hilden K.S."/>
            <person name="Hope R."/>
            <person name="Hossain A."/>
            <person name="Karabika E."/>
            <person name="Karaffa L."/>
            <person name="Karanyi Z."/>
            <person name="Krasevec N."/>
            <person name="Kuo A."/>
            <person name="Kusch H."/>
            <person name="LaButti K."/>
            <person name="Lagendijk E.L."/>
            <person name="Lapidus A."/>
            <person name="Levasseur A."/>
            <person name="Lindquist E."/>
            <person name="Lipzen A."/>
            <person name="Logrieco A.F."/>
            <person name="MacCabe A."/>
            <person name="Maekelae M.R."/>
            <person name="Malavazi I."/>
            <person name="Melin P."/>
            <person name="Meyer V."/>
            <person name="Mielnichuk N."/>
            <person name="Miskei M."/>
            <person name="Molnar A.P."/>
            <person name="Mule G."/>
            <person name="Ngan C.Y."/>
            <person name="Orejas M."/>
            <person name="Orosz E."/>
            <person name="Ouedraogo J.P."/>
            <person name="Overkamp K.M."/>
            <person name="Park H.-S."/>
            <person name="Perrone G."/>
            <person name="Piumi F."/>
            <person name="Punt P.J."/>
            <person name="Ram A.F."/>
            <person name="Ramon A."/>
            <person name="Rauscher S."/>
            <person name="Record E."/>
            <person name="Riano-Pachon D.M."/>
            <person name="Robert V."/>
            <person name="Roehrig J."/>
            <person name="Ruller R."/>
            <person name="Salamov A."/>
            <person name="Salih N.S."/>
            <person name="Samson R.A."/>
            <person name="Sandor E."/>
            <person name="Sanguinetti M."/>
            <person name="Schuetze T."/>
            <person name="Sepcic K."/>
            <person name="Shelest E."/>
            <person name="Sherlock G."/>
            <person name="Sophianopoulou V."/>
            <person name="Squina F.M."/>
            <person name="Sun H."/>
            <person name="Susca A."/>
            <person name="Todd R.B."/>
            <person name="Tsang A."/>
            <person name="Unkles S.E."/>
            <person name="van de Wiele N."/>
            <person name="van Rossen-Uffink D."/>
            <person name="Oliveira J.V."/>
            <person name="Vesth T.C."/>
            <person name="Visser J."/>
            <person name="Yu J.-H."/>
            <person name="Zhou M."/>
            <person name="Andersen M.R."/>
            <person name="Archer D.B."/>
            <person name="Baker S.E."/>
            <person name="Benoit I."/>
            <person name="Brakhage A.A."/>
            <person name="Braus G.H."/>
            <person name="Fischer R."/>
            <person name="Frisvad J.C."/>
            <person name="Goldman G.H."/>
            <person name="Houbraken J."/>
            <person name="Oakley B."/>
            <person name="Pocsi I."/>
            <person name="Scazzocchio C."/>
            <person name="Seiboth B."/>
            <person name="vanKuyk P.A."/>
            <person name="Wortman J."/>
            <person name="Dyer P.S."/>
            <person name="Grigoriev I.V."/>
        </authorList>
    </citation>
    <scope>NUCLEOTIDE SEQUENCE [LARGE SCALE GENOMIC DNA]</scope>
    <source>
        <strain>ATCC 16872 / CBS 172.66 / WB 5094</strain>
    </source>
</reference>
<reference key="2">
    <citation type="journal article" date="2017" name="Neoplasma">
        <title>Secalonic acid- F inhibited cell growth more effectively than 5-fluorouracil on hepatocellular carcinoma in vitro and in vivo.</title>
        <authorList>
            <person name="Gao X."/>
            <person name="Sun H.L."/>
            <person name="Liu D.S."/>
            <person name="Zhang J.R."/>
            <person name="Zhang J."/>
            <person name="Yan M.M."/>
            <person name="Pan X.H."/>
        </authorList>
    </citation>
    <scope>BIOTECHNOLOGY</scope>
</reference>
<reference key="3">
    <citation type="journal article" date="2018" name="Curr. Microbiol.">
        <title>Secondary Metabolites and Their Biological Activity from Aspergillus aculeatus KKU-CT2.</title>
        <authorList>
            <person name="Yodsing N."/>
            <person name="Lekphrom R."/>
            <person name="Sangsopha W."/>
            <person name="Aimi T."/>
            <person name="Boonlue S."/>
        </authorList>
    </citation>
    <scope>BIOTECHNOLOGY</scope>
</reference>
<reference key="4">
    <citation type="journal article" date="2019" name="Chem. Sci.">
        <title>Structure revision of cryptosporioptides and determination of the genetic basis for dimeric xanthone biosynthesis in fungi.</title>
        <authorList>
            <person name="Greco C."/>
            <person name="de Mattos-Shipley K."/>
            <person name="Bailey A.M."/>
            <person name="Mulholland N.P."/>
            <person name="Vincent J.L."/>
            <person name="Willis C.L."/>
            <person name="Cox R.J."/>
            <person name="Simpson T.J."/>
        </authorList>
    </citation>
    <scope>IDENTIFICATION</scope>
    <scope>FUNCTION</scope>
</reference>
<reference key="5">
    <citation type="journal article" date="2019" name="Molecules">
        <title>Secalonic Acid-F, a Novel Mycotoxin, Represses the Progression of Hepatocellular Carcinoma via MARCH1 Regulation of the PI3K/AKT/beta-catenin Signaling Pathway.</title>
        <authorList>
            <person name="Xie L."/>
            <person name="Li M."/>
            <person name="Liu D."/>
            <person name="Wang X."/>
            <person name="Wang P."/>
            <person name="Dai H."/>
            <person name="Yang W."/>
            <person name="Liu W."/>
            <person name="Hu X."/>
            <person name="Zhao M."/>
        </authorList>
    </citation>
    <scope>BIOTECHNOLOGY</scope>
</reference>
<reference key="6">
    <citation type="journal article" date="2020" name="ACS Omega">
        <title>Discovery of a Secalonic Acid Derivative from Aspergillus aculeatus, an Endophyte of Rosa damascena Mill., Triggers Apoptosis in MDA-MB-231 Triple Negative Breast Cancer Cells.</title>
        <authorList>
            <person name="Farooq S."/>
            <person name="Qayum A."/>
            <person name="Nalli Y."/>
            <person name="Lauro G."/>
            <person name="Chini M.G."/>
            <person name="Bifulco G."/>
            <person name="Chaubey A."/>
            <person name="Singh S.K."/>
            <person name="Riyaz-Ul-Hassan S."/>
            <person name="Ali A."/>
        </authorList>
    </citation>
    <scope>BIOTECHNOLOGY</scope>
</reference>
<reference key="7">
    <citation type="journal article" date="2021" name="J. Nat. Prod.">
        <title>Heterologous biosynthesis of tetrahydroxanthone dimers: determination of key factors for selective or divergent synthesis.</title>
        <authorList>
            <person name="Wei X."/>
            <person name="Chen X."/>
            <person name="Chen L."/>
            <person name="Yan D."/>
            <person name="Wang W.G."/>
            <person name="Matsuda Y."/>
        </authorList>
    </citation>
    <scope>FUNCTION</scope>
    <scope>CATALYTIC ACTIVITY</scope>
    <scope>PATHWAY</scope>
</reference>